<reference key="1">
    <citation type="journal article" date="2004" name="Nucleic Acids Res.">
        <title>Unique features revealed by the genome sequence of Acinetobacter sp. ADP1, a versatile and naturally transformation competent bacterium.</title>
        <authorList>
            <person name="Barbe V."/>
            <person name="Vallenet D."/>
            <person name="Fonknechten N."/>
            <person name="Kreimeyer A."/>
            <person name="Oztas S."/>
            <person name="Labarre L."/>
            <person name="Cruveiller S."/>
            <person name="Robert C."/>
            <person name="Duprat S."/>
            <person name="Wincker P."/>
            <person name="Ornston L.N."/>
            <person name="Weissenbach J."/>
            <person name="Marliere P."/>
            <person name="Cohen G.N."/>
            <person name="Medigue C."/>
        </authorList>
    </citation>
    <scope>NUCLEOTIDE SEQUENCE [LARGE SCALE GENOMIC DNA]</scope>
    <source>
        <strain>ATCC 33305 / BD413 / ADP1</strain>
    </source>
</reference>
<organism>
    <name type="scientific">Acinetobacter baylyi (strain ATCC 33305 / BD413 / ADP1)</name>
    <dbReference type="NCBI Taxonomy" id="62977"/>
    <lineage>
        <taxon>Bacteria</taxon>
        <taxon>Pseudomonadati</taxon>
        <taxon>Pseudomonadota</taxon>
        <taxon>Gammaproteobacteria</taxon>
        <taxon>Moraxellales</taxon>
        <taxon>Moraxellaceae</taxon>
        <taxon>Acinetobacter</taxon>
    </lineage>
</organism>
<accession>Q6FCH4</accession>
<dbReference type="EC" id="2.8.4.4" evidence="1"/>
<dbReference type="EMBL" id="CR543861">
    <property type="protein sequence ID" value="CAG68237.1"/>
    <property type="molecule type" value="Genomic_DNA"/>
</dbReference>
<dbReference type="RefSeq" id="WP_004925675.1">
    <property type="nucleotide sequence ID" value="NC_005966.1"/>
</dbReference>
<dbReference type="SMR" id="Q6FCH4"/>
<dbReference type="STRING" id="202950.GCA_001485005_01128"/>
<dbReference type="GeneID" id="45233786"/>
<dbReference type="KEGG" id="aci:ACIAD1371"/>
<dbReference type="eggNOG" id="COG0621">
    <property type="taxonomic scope" value="Bacteria"/>
</dbReference>
<dbReference type="HOGENOM" id="CLU_018697_0_0_6"/>
<dbReference type="OrthoDB" id="9805215at2"/>
<dbReference type="BioCyc" id="ASP62977:ACIAD_RS06320-MONOMER"/>
<dbReference type="Proteomes" id="UP000000430">
    <property type="component" value="Chromosome"/>
</dbReference>
<dbReference type="GO" id="GO:0005829">
    <property type="term" value="C:cytosol"/>
    <property type="evidence" value="ECO:0007669"/>
    <property type="project" value="TreeGrafter"/>
</dbReference>
<dbReference type="GO" id="GO:0051539">
    <property type="term" value="F:4 iron, 4 sulfur cluster binding"/>
    <property type="evidence" value="ECO:0007669"/>
    <property type="project" value="UniProtKB-UniRule"/>
</dbReference>
<dbReference type="GO" id="GO:0035599">
    <property type="term" value="F:aspartic acid methylthiotransferase activity"/>
    <property type="evidence" value="ECO:0007669"/>
    <property type="project" value="TreeGrafter"/>
</dbReference>
<dbReference type="GO" id="GO:0046872">
    <property type="term" value="F:metal ion binding"/>
    <property type="evidence" value="ECO:0007669"/>
    <property type="project" value="UniProtKB-KW"/>
</dbReference>
<dbReference type="GO" id="GO:0103039">
    <property type="term" value="F:protein methylthiotransferase activity"/>
    <property type="evidence" value="ECO:0007669"/>
    <property type="project" value="UniProtKB-EC"/>
</dbReference>
<dbReference type="GO" id="GO:0006400">
    <property type="term" value="P:tRNA modification"/>
    <property type="evidence" value="ECO:0007669"/>
    <property type="project" value="InterPro"/>
</dbReference>
<dbReference type="CDD" id="cd01335">
    <property type="entry name" value="Radical_SAM"/>
    <property type="match status" value="1"/>
</dbReference>
<dbReference type="FunFam" id="3.40.50.12160:FF:000002">
    <property type="entry name" value="Ribosomal protein S12 methylthiotransferase RimO"/>
    <property type="match status" value="1"/>
</dbReference>
<dbReference type="FunFam" id="3.80.30.20:FF:000001">
    <property type="entry name" value="tRNA-2-methylthio-N(6)-dimethylallyladenosine synthase 2"/>
    <property type="match status" value="1"/>
</dbReference>
<dbReference type="Gene3D" id="3.40.50.12160">
    <property type="entry name" value="Methylthiotransferase, N-terminal domain"/>
    <property type="match status" value="1"/>
</dbReference>
<dbReference type="Gene3D" id="2.40.50.140">
    <property type="entry name" value="Nucleic acid-binding proteins"/>
    <property type="match status" value="1"/>
</dbReference>
<dbReference type="Gene3D" id="3.80.30.20">
    <property type="entry name" value="tm_1862 like domain"/>
    <property type="match status" value="1"/>
</dbReference>
<dbReference type="HAMAP" id="MF_01865">
    <property type="entry name" value="MTTase_RimO"/>
    <property type="match status" value="1"/>
</dbReference>
<dbReference type="InterPro" id="IPR006638">
    <property type="entry name" value="Elp3/MiaA/NifB-like_rSAM"/>
</dbReference>
<dbReference type="InterPro" id="IPR005839">
    <property type="entry name" value="Methylthiotransferase"/>
</dbReference>
<dbReference type="InterPro" id="IPR020612">
    <property type="entry name" value="Methylthiotransferase_CS"/>
</dbReference>
<dbReference type="InterPro" id="IPR013848">
    <property type="entry name" value="Methylthiotransferase_N"/>
</dbReference>
<dbReference type="InterPro" id="IPR038135">
    <property type="entry name" value="Methylthiotransferase_N_sf"/>
</dbReference>
<dbReference type="InterPro" id="IPR012340">
    <property type="entry name" value="NA-bd_OB-fold"/>
</dbReference>
<dbReference type="InterPro" id="IPR005840">
    <property type="entry name" value="Ribosomal_uS12_MeSTrfase_RimO"/>
</dbReference>
<dbReference type="InterPro" id="IPR007197">
    <property type="entry name" value="rSAM"/>
</dbReference>
<dbReference type="InterPro" id="IPR023404">
    <property type="entry name" value="rSAM_horseshoe"/>
</dbReference>
<dbReference type="InterPro" id="IPR002792">
    <property type="entry name" value="TRAM_dom"/>
</dbReference>
<dbReference type="NCBIfam" id="TIGR01125">
    <property type="entry name" value="30S ribosomal protein S12 methylthiotransferase RimO"/>
    <property type="match status" value="1"/>
</dbReference>
<dbReference type="NCBIfam" id="TIGR00089">
    <property type="entry name" value="MiaB/RimO family radical SAM methylthiotransferase"/>
    <property type="match status" value="1"/>
</dbReference>
<dbReference type="PANTHER" id="PTHR43837">
    <property type="entry name" value="RIBOSOMAL PROTEIN S12 METHYLTHIOTRANSFERASE RIMO"/>
    <property type="match status" value="1"/>
</dbReference>
<dbReference type="PANTHER" id="PTHR43837:SF1">
    <property type="entry name" value="RIBOSOMAL PROTEIN US12 METHYLTHIOTRANSFERASE RIMO"/>
    <property type="match status" value="1"/>
</dbReference>
<dbReference type="Pfam" id="PF04055">
    <property type="entry name" value="Radical_SAM"/>
    <property type="match status" value="1"/>
</dbReference>
<dbReference type="Pfam" id="PF18693">
    <property type="entry name" value="TRAM_2"/>
    <property type="match status" value="1"/>
</dbReference>
<dbReference type="Pfam" id="PF00919">
    <property type="entry name" value="UPF0004"/>
    <property type="match status" value="1"/>
</dbReference>
<dbReference type="SFLD" id="SFLDG01082">
    <property type="entry name" value="B12-binding_domain_containing"/>
    <property type="match status" value="1"/>
</dbReference>
<dbReference type="SFLD" id="SFLDG01061">
    <property type="entry name" value="methylthiotransferase"/>
    <property type="match status" value="1"/>
</dbReference>
<dbReference type="SFLD" id="SFLDF00274">
    <property type="entry name" value="ribosomal_protein_S12_methylth"/>
    <property type="match status" value="1"/>
</dbReference>
<dbReference type="SMART" id="SM00729">
    <property type="entry name" value="Elp3"/>
    <property type="match status" value="1"/>
</dbReference>
<dbReference type="SUPFAM" id="SSF102114">
    <property type="entry name" value="Radical SAM enzymes"/>
    <property type="match status" value="1"/>
</dbReference>
<dbReference type="PROSITE" id="PS51449">
    <property type="entry name" value="MTTASE_N"/>
    <property type="match status" value="1"/>
</dbReference>
<dbReference type="PROSITE" id="PS01278">
    <property type="entry name" value="MTTASE_RADICAL"/>
    <property type="match status" value="1"/>
</dbReference>
<dbReference type="PROSITE" id="PS51918">
    <property type="entry name" value="RADICAL_SAM"/>
    <property type="match status" value="1"/>
</dbReference>
<dbReference type="PROSITE" id="PS50926">
    <property type="entry name" value="TRAM"/>
    <property type="match status" value="1"/>
</dbReference>
<proteinExistence type="inferred from homology"/>
<feature type="chain" id="PRO_0000374684" description="Ribosomal protein uS12 methylthiotransferase RimO">
    <location>
        <begin position="1"/>
        <end position="447"/>
    </location>
</feature>
<feature type="domain" description="MTTase N-terminal" evidence="1">
    <location>
        <begin position="4"/>
        <end position="114"/>
    </location>
</feature>
<feature type="domain" description="Radical SAM core" evidence="2">
    <location>
        <begin position="133"/>
        <end position="370"/>
    </location>
</feature>
<feature type="domain" description="TRAM" evidence="1">
    <location>
        <begin position="373"/>
        <end position="443"/>
    </location>
</feature>
<feature type="binding site" evidence="1">
    <location>
        <position position="13"/>
    </location>
    <ligand>
        <name>[4Fe-4S] cluster</name>
        <dbReference type="ChEBI" id="CHEBI:49883"/>
        <label>1</label>
    </ligand>
</feature>
<feature type="binding site" evidence="1">
    <location>
        <position position="49"/>
    </location>
    <ligand>
        <name>[4Fe-4S] cluster</name>
        <dbReference type="ChEBI" id="CHEBI:49883"/>
        <label>1</label>
    </ligand>
</feature>
<feature type="binding site" evidence="1">
    <location>
        <position position="78"/>
    </location>
    <ligand>
        <name>[4Fe-4S] cluster</name>
        <dbReference type="ChEBI" id="CHEBI:49883"/>
        <label>1</label>
    </ligand>
</feature>
<feature type="binding site" evidence="1">
    <location>
        <position position="147"/>
    </location>
    <ligand>
        <name>[4Fe-4S] cluster</name>
        <dbReference type="ChEBI" id="CHEBI:49883"/>
        <label>2</label>
        <note>4Fe-4S-S-AdoMet</note>
    </ligand>
</feature>
<feature type="binding site" evidence="1">
    <location>
        <position position="151"/>
    </location>
    <ligand>
        <name>[4Fe-4S] cluster</name>
        <dbReference type="ChEBI" id="CHEBI:49883"/>
        <label>2</label>
        <note>4Fe-4S-S-AdoMet</note>
    </ligand>
</feature>
<feature type="binding site" evidence="1">
    <location>
        <position position="154"/>
    </location>
    <ligand>
        <name>[4Fe-4S] cluster</name>
        <dbReference type="ChEBI" id="CHEBI:49883"/>
        <label>2</label>
        <note>4Fe-4S-S-AdoMet</note>
    </ligand>
</feature>
<sequence>MKSPKVGFVSLGCPKALVDSERILTQLRTEGYQVASDYDGADLVVVNTCGFIESAVQESLDAIGEAMSENGRVIVTGCLGKDEDKIRQMHPNVLKVTGAAAYQDVMEAVHEYVPAPPRHNPFVDLVPEQGIRLTPKHYAYLKISEGCNHRCTFCIIPSMRGDLVSRPVGSVLEEAAALKRAGVKEVLVISQDTSAYGVDTKYKLDFWNGQPVKTKFYDMCEALGQLGIWVRLHYVYPYPHVDAVIDLMAQGKILPYLDIPFQHASPRILKLMKRPAHSENTLDRIKVWREKCPNLVIRSTFVVGFPGETEEDFQILLEWLKEAQLDRVGCFTYSPVEGATANDLPDHVSEEVKQERYERFMQVQQEISAARLQKRIGQTMTVLVDSLEDEYPVAVARSYADAPEIDGNVFVEDIDKSLVQPGQLLEVEITDADEYDLFAKLIQIKTA</sequence>
<comment type="function">
    <text evidence="1">Catalyzes the methylthiolation of an aspartic acid residue of ribosomal protein uS12.</text>
</comment>
<comment type="catalytic activity">
    <reaction evidence="1">
        <text>L-aspartate(89)-[ribosomal protein uS12]-hydrogen + (sulfur carrier)-SH + AH2 + 2 S-adenosyl-L-methionine = 3-methylsulfanyl-L-aspartate(89)-[ribosomal protein uS12]-hydrogen + (sulfur carrier)-H + 5'-deoxyadenosine + L-methionine + A + S-adenosyl-L-homocysteine + 2 H(+)</text>
        <dbReference type="Rhea" id="RHEA:37087"/>
        <dbReference type="Rhea" id="RHEA-COMP:10460"/>
        <dbReference type="Rhea" id="RHEA-COMP:10461"/>
        <dbReference type="Rhea" id="RHEA-COMP:14737"/>
        <dbReference type="Rhea" id="RHEA-COMP:14739"/>
        <dbReference type="ChEBI" id="CHEBI:13193"/>
        <dbReference type="ChEBI" id="CHEBI:15378"/>
        <dbReference type="ChEBI" id="CHEBI:17319"/>
        <dbReference type="ChEBI" id="CHEBI:17499"/>
        <dbReference type="ChEBI" id="CHEBI:29917"/>
        <dbReference type="ChEBI" id="CHEBI:29961"/>
        <dbReference type="ChEBI" id="CHEBI:57844"/>
        <dbReference type="ChEBI" id="CHEBI:57856"/>
        <dbReference type="ChEBI" id="CHEBI:59789"/>
        <dbReference type="ChEBI" id="CHEBI:64428"/>
        <dbReference type="ChEBI" id="CHEBI:73599"/>
        <dbReference type="EC" id="2.8.4.4"/>
    </reaction>
</comment>
<comment type="cofactor">
    <cofactor evidence="1">
        <name>[4Fe-4S] cluster</name>
        <dbReference type="ChEBI" id="CHEBI:49883"/>
    </cofactor>
    <text evidence="1">Binds 2 [4Fe-4S] clusters. One cluster is coordinated with 3 cysteines and an exchangeable S-adenosyl-L-methionine.</text>
</comment>
<comment type="subcellular location">
    <subcellularLocation>
        <location evidence="1">Cytoplasm</location>
    </subcellularLocation>
</comment>
<comment type="similarity">
    <text evidence="1">Belongs to the methylthiotransferase family. RimO subfamily.</text>
</comment>
<keyword id="KW-0004">4Fe-4S</keyword>
<keyword id="KW-0963">Cytoplasm</keyword>
<keyword id="KW-0408">Iron</keyword>
<keyword id="KW-0411">Iron-sulfur</keyword>
<keyword id="KW-0479">Metal-binding</keyword>
<keyword id="KW-0949">S-adenosyl-L-methionine</keyword>
<keyword id="KW-0808">Transferase</keyword>
<evidence type="ECO:0000255" key="1">
    <source>
        <dbReference type="HAMAP-Rule" id="MF_01865"/>
    </source>
</evidence>
<evidence type="ECO:0000255" key="2">
    <source>
        <dbReference type="PROSITE-ProRule" id="PRU01266"/>
    </source>
</evidence>
<protein>
    <recommendedName>
        <fullName evidence="1">Ribosomal protein uS12 methylthiotransferase RimO</fullName>
        <shortName evidence="1">uS12 MTTase</shortName>
        <shortName evidence="1">uS12 methylthiotransferase</shortName>
        <ecNumber evidence="1">2.8.4.4</ecNumber>
    </recommendedName>
    <alternativeName>
        <fullName evidence="1">Ribosomal protein uS12 (aspartate-C(3))-methylthiotransferase</fullName>
    </alternativeName>
    <alternativeName>
        <fullName evidence="1">Ribosome maturation factor RimO</fullName>
    </alternativeName>
</protein>
<name>RIMO_ACIAD</name>
<gene>
    <name evidence="1" type="primary">rimO</name>
    <name type="ordered locus">ACIAD1371</name>
</gene>